<accession>A6NKG5</accession>
<accession>E9PKS8</accession>
<organism>
    <name type="scientific">Homo sapiens</name>
    <name type="common">Human</name>
    <dbReference type="NCBI Taxonomy" id="9606"/>
    <lineage>
        <taxon>Eukaryota</taxon>
        <taxon>Metazoa</taxon>
        <taxon>Chordata</taxon>
        <taxon>Craniata</taxon>
        <taxon>Vertebrata</taxon>
        <taxon>Euteleostomi</taxon>
        <taxon>Mammalia</taxon>
        <taxon>Eutheria</taxon>
        <taxon>Euarchontoglires</taxon>
        <taxon>Primates</taxon>
        <taxon>Haplorrhini</taxon>
        <taxon>Catarrhini</taxon>
        <taxon>Hominidae</taxon>
        <taxon>Homo</taxon>
    </lineage>
</organism>
<feature type="chain" id="PRO_0000339233" description="Retrotransposon-like protein 1">
    <location>
        <begin position="1"/>
        <end position="1358"/>
    </location>
</feature>
<feature type="transmembrane region" description="Helical" evidence="2">
    <location>
        <begin position="1083"/>
        <end position="1099"/>
    </location>
</feature>
<feature type="transmembrane region" description="Helical" evidence="2">
    <location>
        <begin position="1126"/>
        <end position="1146"/>
    </location>
</feature>
<feature type="region of interest" description="Disordered" evidence="3">
    <location>
        <begin position="1"/>
        <end position="159"/>
    </location>
</feature>
<feature type="region of interest" description="Disordered" evidence="3">
    <location>
        <begin position="563"/>
        <end position="616"/>
    </location>
</feature>
<feature type="region of interest" description="Disordered" evidence="3">
    <location>
        <begin position="1250"/>
        <end position="1283"/>
    </location>
</feature>
<feature type="region of interest" description="Disordered" evidence="3">
    <location>
        <begin position="1338"/>
        <end position="1358"/>
    </location>
</feature>
<feature type="compositionally biased region" description="Low complexity" evidence="3">
    <location>
        <begin position="19"/>
        <end position="30"/>
    </location>
</feature>
<feature type="compositionally biased region" description="Acidic residues" evidence="3">
    <location>
        <begin position="65"/>
        <end position="79"/>
    </location>
</feature>
<feature type="compositionally biased region" description="Basic and acidic residues" evidence="3">
    <location>
        <begin position="131"/>
        <end position="149"/>
    </location>
</feature>
<feature type="compositionally biased region" description="Acidic residues" evidence="3">
    <location>
        <begin position="583"/>
        <end position="592"/>
    </location>
</feature>
<feature type="compositionally biased region" description="Low complexity" evidence="3">
    <location>
        <begin position="1267"/>
        <end position="1276"/>
    </location>
</feature>
<feature type="compositionally biased region" description="Basic and acidic residues" evidence="3">
    <location>
        <begin position="1338"/>
        <end position="1347"/>
    </location>
</feature>
<feature type="compositionally biased region" description="Acidic residues" evidence="3">
    <location>
        <begin position="1348"/>
        <end position="1358"/>
    </location>
</feature>
<feature type="sequence variant" id="VAR_043937" description="In dbSNP:rs11623267.">
    <original>E</original>
    <variation>Q</variation>
    <location>
        <position position="848"/>
    </location>
</feature>
<comment type="function">
    <text evidence="1">Plays an essential role in capillaries endothelial cells for the maintenance of feto-maternal interface and for development of the placenta.</text>
</comment>
<comment type="subcellular location">
    <subcellularLocation>
        <location evidence="4">Membrane</location>
        <topology evidence="4">Multi-pass membrane protein</topology>
    </subcellularLocation>
</comment>
<comment type="miscellaneous">
    <text>Rtl1 is one of at least 11 genes called Mar or Mart related to long terminal repeat retrotransposons. They do not correspond to functional retrotransposons, but rather to neofunctionalized retrotransposons genes.</text>
</comment>
<comment type="miscellaneous">
    <text>RTL1 is an imprinted gene located in a cluster of imprinted genes on chromosome 14. It is expressed from the paternal chromosome and has an antisense transcript with full complementarity to RTL1, RTL1as, expressed from the maternal chromosome, which acts as a repressor for RTL1. Excessive RTL1 expression and decreased RTL1 expression are relevant to upd(14)pat-like and upd(14)mat-like phenotypes, respectively. Paternal and maternal uniparental disomy for chromosome 14 (upd(14)pat and upd(14)mat) cause distinct phenotypes; Upd(14)pat results in a unique phenotype characterized by facial abnormality, a small, bell-shaped thorax and abdominal wall defects, and upd(14)mat leads to pre- and postnatal growth failure and early onset of puberty.</text>
</comment>
<protein>
    <recommendedName>
        <fullName>Retrotransposon-like protein 1</fullName>
    </recommendedName>
    <alternativeName>
        <fullName>Mammalian retrotransposon derived protein 1</fullName>
    </alternativeName>
    <alternativeName>
        <fullName>Paternally expressed gene 11 protein</fullName>
    </alternativeName>
    <alternativeName>
        <fullName>Retrotransposon-derived protein PEG11</fullName>
    </alternativeName>
</protein>
<evidence type="ECO:0000250" key="1"/>
<evidence type="ECO:0000255" key="2"/>
<evidence type="ECO:0000256" key="3">
    <source>
        <dbReference type="SAM" id="MobiDB-lite"/>
    </source>
</evidence>
<evidence type="ECO:0000305" key="4"/>
<reference key="1">
    <citation type="journal article" date="2003" name="Nature">
        <title>The DNA sequence and analysis of human chromosome 14.</title>
        <authorList>
            <person name="Heilig R."/>
            <person name="Eckenberg R."/>
            <person name="Petit J.-L."/>
            <person name="Fonknechten N."/>
            <person name="Da Silva C."/>
            <person name="Cattolico L."/>
            <person name="Levy M."/>
            <person name="Barbe V."/>
            <person name="De Berardinis V."/>
            <person name="Ureta-Vidal A."/>
            <person name="Pelletier E."/>
            <person name="Vico V."/>
            <person name="Anthouard V."/>
            <person name="Rowen L."/>
            <person name="Madan A."/>
            <person name="Qin S."/>
            <person name="Sun H."/>
            <person name="Du H."/>
            <person name="Pepin K."/>
            <person name="Artiguenave F."/>
            <person name="Robert C."/>
            <person name="Cruaud C."/>
            <person name="Bruels T."/>
            <person name="Jaillon O."/>
            <person name="Friedlander L."/>
            <person name="Samson G."/>
            <person name="Brottier P."/>
            <person name="Cure S."/>
            <person name="Segurens B."/>
            <person name="Aniere F."/>
            <person name="Samain S."/>
            <person name="Crespeau H."/>
            <person name="Abbasi N."/>
            <person name="Aiach N."/>
            <person name="Boscus D."/>
            <person name="Dickhoff R."/>
            <person name="Dors M."/>
            <person name="Dubois I."/>
            <person name="Friedman C."/>
            <person name="Gouyvenoux M."/>
            <person name="James R."/>
            <person name="Madan A."/>
            <person name="Mairey-Estrada B."/>
            <person name="Mangenot S."/>
            <person name="Martins N."/>
            <person name="Menard M."/>
            <person name="Oztas S."/>
            <person name="Ratcliffe A."/>
            <person name="Shaffer T."/>
            <person name="Trask B."/>
            <person name="Vacherie B."/>
            <person name="Bellemere C."/>
            <person name="Belser C."/>
            <person name="Besnard-Gonnet M."/>
            <person name="Bartol-Mavel D."/>
            <person name="Boutard M."/>
            <person name="Briez-Silla S."/>
            <person name="Combette S."/>
            <person name="Dufosse-Laurent V."/>
            <person name="Ferron C."/>
            <person name="Lechaplais C."/>
            <person name="Louesse C."/>
            <person name="Muselet D."/>
            <person name="Magdelenat G."/>
            <person name="Pateau E."/>
            <person name="Petit E."/>
            <person name="Sirvain-Trukniewicz P."/>
            <person name="Trybou A."/>
            <person name="Vega-Czarny N."/>
            <person name="Bataille E."/>
            <person name="Bluet E."/>
            <person name="Bordelais I."/>
            <person name="Dubois M."/>
            <person name="Dumont C."/>
            <person name="Guerin T."/>
            <person name="Haffray S."/>
            <person name="Hammadi R."/>
            <person name="Muanga J."/>
            <person name="Pellouin V."/>
            <person name="Robert D."/>
            <person name="Wunderle E."/>
            <person name="Gauguet G."/>
            <person name="Roy A."/>
            <person name="Sainte-Marthe L."/>
            <person name="Verdier J."/>
            <person name="Verdier-Discala C."/>
            <person name="Hillier L.W."/>
            <person name="Fulton L."/>
            <person name="McPherson J."/>
            <person name="Matsuda F."/>
            <person name="Wilson R."/>
            <person name="Scarpelli C."/>
            <person name="Gyapay G."/>
            <person name="Wincker P."/>
            <person name="Saurin W."/>
            <person name="Quetier F."/>
            <person name="Waterston R."/>
            <person name="Hood L."/>
            <person name="Weissenbach J."/>
        </authorList>
    </citation>
    <scope>NUCLEOTIDE SEQUENCE [LARGE SCALE GENOMIC DNA]</scope>
</reference>
<reference key="2">
    <citation type="journal article" date="2005" name="Cytogenet. Genome Res.">
        <title>A family of neofunctionalized Ty3/gypsy retrotransposon genes in mammalian genomes.</title>
        <authorList>
            <person name="Brandt J."/>
            <person name="Veith A.-M."/>
            <person name="Volff J.-N."/>
        </authorList>
    </citation>
    <scope>GENE FAMILY</scope>
</reference>
<reference key="3">
    <citation type="journal article" date="2008" name="Nat. Genet.">
        <title>Deletions and epimutations affecting the human 14q32.2 imprinted region in individuals with paternal and maternal upd(14)-like phenotypes.</title>
        <authorList>
            <person name="Kagami M."/>
            <person name="Sekita Y."/>
            <person name="Nishimura G."/>
            <person name="Irie M."/>
            <person name="Kato F."/>
            <person name="Okada M."/>
            <person name="Yamamori S."/>
            <person name="Kishimoto H."/>
            <person name="Nakayama M."/>
            <person name="Tanaka Y."/>
            <person name="Matsuoka K."/>
            <person name="Takahashi T."/>
            <person name="Noguchi M."/>
            <person name="Tanaka Y."/>
            <person name="Masumoto K."/>
            <person name="Utsunomiya T."/>
            <person name="Kouzan H."/>
            <person name="Komatsu Y."/>
            <person name="Ohashi H."/>
            <person name="Kurosawa K."/>
            <person name="Kosaki K."/>
            <person name="Ferguson-Smith A.C."/>
            <person name="Ishino F."/>
            <person name="Ogata T."/>
        </authorList>
    </citation>
    <scope>IMPRINTING</scope>
</reference>
<name>RTL1_HUMAN</name>
<keyword id="KW-0217">Developmental protein</keyword>
<keyword id="KW-0472">Membrane</keyword>
<keyword id="KW-1267">Proteomics identification</keyword>
<keyword id="KW-1185">Reference proteome</keyword>
<keyword id="KW-0812">Transmembrane</keyword>
<keyword id="KW-1133">Transmembrane helix</keyword>
<gene>
    <name type="primary">RTL1</name>
    <name type="synonym">MAR1</name>
    <name type="synonym">MART1</name>
    <name type="synonym">PEG11</name>
</gene>
<dbReference type="EMBL" id="AL117190">
    <property type="status" value="NOT_ANNOTATED_CDS"/>
    <property type="molecule type" value="Genomic_DNA"/>
</dbReference>
<dbReference type="CCDS" id="CCDS53910.1"/>
<dbReference type="RefSeq" id="NP_001128360.1">
    <property type="nucleotide sequence ID" value="NM_001134888.3"/>
</dbReference>
<dbReference type="RefSeq" id="NP_001412214.1">
    <property type="nucleotide sequence ID" value="NM_001425285.1"/>
</dbReference>
<dbReference type="SMR" id="A6NKG5"/>
<dbReference type="BioGRID" id="132539">
    <property type="interactions" value="7"/>
</dbReference>
<dbReference type="FunCoup" id="A6NKG5">
    <property type="interactions" value="54"/>
</dbReference>
<dbReference type="IntAct" id="A6NKG5">
    <property type="interactions" value="1"/>
</dbReference>
<dbReference type="STRING" id="9606.ENSP00000497482"/>
<dbReference type="GlyGen" id="A6NKG5">
    <property type="glycosylation" value="2 sites"/>
</dbReference>
<dbReference type="iPTMnet" id="A6NKG5"/>
<dbReference type="PhosphoSitePlus" id="A6NKG5"/>
<dbReference type="BioMuta" id="RTL1"/>
<dbReference type="jPOST" id="A6NKG5"/>
<dbReference type="MassIVE" id="A6NKG5"/>
<dbReference type="PaxDb" id="9606-ENSP00000435342"/>
<dbReference type="PeptideAtlas" id="A6NKG5"/>
<dbReference type="ProteomicsDB" id="1414"/>
<dbReference type="ProteomicsDB" id="21567"/>
<dbReference type="Antibodypedia" id="55244">
    <property type="antibodies" value="61 antibodies from 12 providers"/>
</dbReference>
<dbReference type="DNASU" id="388015"/>
<dbReference type="Ensembl" id="ENST00000649591.1">
    <property type="protein sequence ID" value="ENSP00000497482.1"/>
    <property type="gene ID" value="ENSG00000254656.3"/>
</dbReference>
<dbReference type="GeneID" id="388015"/>
<dbReference type="KEGG" id="hsa:388015"/>
<dbReference type="MANE-Select" id="ENST00000649591.1">
    <property type="protein sequence ID" value="ENSP00000497482.1"/>
    <property type="RefSeq nucleotide sequence ID" value="NM_001134888.3"/>
    <property type="RefSeq protein sequence ID" value="NP_001128360.1"/>
</dbReference>
<dbReference type="UCSC" id="uc010txj.1">
    <property type="organism name" value="human"/>
</dbReference>
<dbReference type="AGR" id="HGNC:14665"/>
<dbReference type="CTD" id="388015"/>
<dbReference type="DisGeNET" id="388015"/>
<dbReference type="GeneCards" id="RTL1"/>
<dbReference type="HGNC" id="HGNC:14665">
    <property type="gene designation" value="RTL1"/>
</dbReference>
<dbReference type="HPA" id="ENSG00000254656">
    <property type="expression patterns" value="Tissue enhanced (adrenal gland, brain, placenta)"/>
</dbReference>
<dbReference type="MalaCards" id="RTL1"/>
<dbReference type="MIM" id="611896">
    <property type="type" value="gene"/>
</dbReference>
<dbReference type="neXtProt" id="NX_A6NKG5"/>
<dbReference type="OpenTargets" id="ENSG00000254656"/>
<dbReference type="Orphanet" id="254534">
    <property type="disease" value="Kagami-Ogata syndrome due to maternal 14q32.2 hypermethylation"/>
</dbReference>
<dbReference type="Orphanet" id="254528">
    <property type="disease" value="Kagami-Ogata syndrome due to maternal 14q32.2 microdeletion"/>
</dbReference>
<dbReference type="Orphanet" id="96334">
    <property type="disease" value="Kagami-Ogata syndrome due to paternal uniparental disomy of chromosome 14"/>
</dbReference>
<dbReference type="Orphanet" id="96184">
    <property type="disease" value="Temple syndrome due to maternal uniparental disomy of chromosome 14"/>
</dbReference>
<dbReference type="Orphanet" id="254531">
    <property type="disease" value="Temple syndrome due to paternal 14q32.2 hypomethylation"/>
</dbReference>
<dbReference type="Orphanet" id="254525">
    <property type="disease" value="Temple syndrome due to paternal 14q32.2 microdeletion"/>
</dbReference>
<dbReference type="VEuPathDB" id="HostDB:ENSG00000254656"/>
<dbReference type="eggNOG" id="KOG0017">
    <property type="taxonomic scope" value="Eukaryota"/>
</dbReference>
<dbReference type="GeneTree" id="ENSGT00950000183173"/>
<dbReference type="HOGENOM" id="CLU_002743_1_0_1"/>
<dbReference type="InParanoid" id="A6NKG5"/>
<dbReference type="OMA" id="EFIVLCQ"/>
<dbReference type="OrthoDB" id="8000983at2759"/>
<dbReference type="PAN-GO" id="A6NKG5">
    <property type="GO annotations" value="0 GO annotations based on evolutionary models"/>
</dbReference>
<dbReference type="PhylomeDB" id="A6NKG5"/>
<dbReference type="TreeFam" id="TF342365"/>
<dbReference type="PathwayCommons" id="A6NKG5"/>
<dbReference type="SignaLink" id="A6NKG5"/>
<dbReference type="BioGRID-ORCS" id="388015">
    <property type="hits" value="5 hits in 1136 CRISPR screens"/>
</dbReference>
<dbReference type="ChiTaRS" id="RTL1">
    <property type="organism name" value="human"/>
</dbReference>
<dbReference type="GenomeRNAi" id="388015"/>
<dbReference type="Pharos" id="A6NKG5">
    <property type="development level" value="Tbio"/>
</dbReference>
<dbReference type="PRO" id="PR:A6NKG5"/>
<dbReference type="Proteomes" id="UP000005640">
    <property type="component" value="Chromosome 14"/>
</dbReference>
<dbReference type="RNAct" id="A6NKG5">
    <property type="molecule type" value="protein"/>
</dbReference>
<dbReference type="Bgee" id="ENSG00000254656">
    <property type="expression patterns" value="Expressed in adrenal tissue and 35 other cell types or tissues"/>
</dbReference>
<dbReference type="GO" id="GO:0016020">
    <property type="term" value="C:membrane"/>
    <property type="evidence" value="ECO:0007669"/>
    <property type="project" value="UniProtKB-SubCell"/>
</dbReference>
<dbReference type="CDD" id="cd00303">
    <property type="entry name" value="retropepsin_like"/>
    <property type="match status" value="1"/>
</dbReference>
<dbReference type="CDD" id="cd01647">
    <property type="entry name" value="RT_LTR"/>
    <property type="match status" value="1"/>
</dbReference>
<dbReference type="Gene3D" id="3.30.70.270">
    <property type="match status" value="2"/>
</dbReference>
<dbReference type="Gene3D" id="2.40.70.10">
    <property type="entry name" value="Acid Proteases"/>
    <property type="match status" value="1"/>
</dbReference>
<dbReference type="InterPro" id="IPR043502">
    <property type="entry name" value="DNA/RNA_pol_sf"/>
</dbReference>
<dbReference type="InterPro" id="IPR032549">
    <property type="entry name" value="DUF4939"/>
</dbReference>
<dbReference type="InterPro" id="IPR021109">
    <property type="entry name" value="Peptidase_aspartic_dom_sf"/>
</dbReference>
<dbReference type="InterPro" id="IPR043128">
    <property type="entry name" value="Rev_trsase/Diguanyl_cyclase"/>
</dbReference>
<dbReference type="InterPro" id="IPR041577">
    <property type="entry name" value="RT_RNaseH_2"/>
</dbReference>
<dbReference type="InterPro" id="IPR032567">
    <property type="entry name" value="RTL1-rel"/>
</dbReference>
<dbReference type="PANTHER" id="PTHR15503">
    <property type="entry name" value="LDOC1 RELATED"/>
    <property type="match status" value="1"/>
</dbReference>
<dbReference type="PANTHER" id="PTHR15503:SF39">
    <property type="entry name" value="RETROTRANSPOSON-LIKE PROTEIN 1"/>
    <property type="match status" value="1"/>
</dbReference>
<dbReference type="Pfam" id="PF16297">
    <property type="entry name" value="DUF4939"/>
    <property type="match status" value="1"/>
</dbReference>
<dbReference type="Pfam" id="PF17919">
    <property type="entry name" value="RT_RNaseH_2"/>
    <property type="match status" value="1"/>
</dbReference>
<dbReference type="SUPFAM" id="SSF50630">
    <property type="entry name" value="Acid proteases"/>
    <property type="match status" value="1"/>
</dbReference>
<dbReference type="SUPFAM" id="SSF56672">
    <property type="entry name" value="DNA/RNA polymerases"/>
    <property type="match status" value="1"/>
</dbReference>
<proteinExistence type="evidence at protein level"/>
<sequence>MIEPSEDSFETMMEHKNPSSKQMESSEGSSNTTEATSGSGVRGEAGPASGPAQEKKEPPSGPLQEMEELPTDLLQDMEEPSSGPRKEIEDPPNDLLQDLEESCNGSHQARGDPLSGASDRMKEASVNPSGAREEQEAHTDLKESGREETPQEQNQTEHSTAELMAMVRSIISLYFRMQDLKEQQRVAEEILIKGINAGQLPAPKHFSGDRREFHEFIVLCQLTLQSYPRMFYNDRLRVGYVINHLSGLALEWAKALLQENSPLIGDFPAFLEAMSEVFEYRQALRVAEEAMFTIRQGGRSATEYIDEFQSLVPILGWPDEVLQAHLCQGLNEEIRHYLFRVPQPDSLDSLIVLILQIEEKLAERRAMLRLPPEARPRNLTWIDSPAPERWMVSSWLPSEVHPDINRAHLFLLLMVRVNPYHSVAVQALVDSGADGNFMDEKFAQEHYVELYEKPYPQPVQSVDGSLIGNEPVWLYTEPLVCIHQNHQESIEFDIVPSPNFSVVLGIRWLRVHAPEVDWIKGRCTFHSPYCLKNCFRPPPPCIALERHGMSLLPGLPHPYSDLADVFNPKEADDETSDQPSSDGSDDLSESEPSELQQAGDSDHSETFYECPSTAPWEPVGARMQERARLQEEYWDLQDMLTNRQDYIQMIPELFDQLHGAEWFTKLELRGTIVEESVNGHRTEDVWKAAFGLELEEMKSYQPFALSPDPIIPQNVIHFILKDMLGFFVLSYGQEVLIYSMSQEEHLHHVRQVLVRFRHHNVYCSLDKSQFHRQTVEFLGFVVTPKGVKLNKNVMTIITGYPTPGSKLSLRNFIEFVFPYRHFVERFSIIAEPLVRQLLSSYQFYWGVEEQEAFECLKRAFRKAPLLHHPKPQNPFYLETGVTGTALHASLIQIDDQTGKRACCAFYSRNISPIEVEYSQAEMKILPIRAAFMVWCRYLENTEEPIMILLNTEDLASLNNDRLTVLLPGHWVFFFSHFNFDVMELPEQDGGRALPPVRNLRWRRAFQRNTAARQTLLLASRGFPRDPSTESGEEENEEQDELNEQILRQELLAMIPIDQILNSFLAHFSMAQIRAVILHFFRGLLYWKNTLALAAILVLLRVRQCLSLRPAPAMRVARPQPQRSLRLILDSSLIAGSSITTAITQLLTQMPALVGANTIPAQELAELFLGPGRWQRNALHSQAHRGLQFTPGFWLTLCEFFGVRVTPQEGHLPALRQNRYLELHVVGDEDVVLREALQDDLQRYRQCGLHDGLQDTSQDKQDNDVQEAPPSHTAATHPPRPRHLMDPQVLEFLGSRLLHIHSADGQLHLLSREQAARALSQFLTLIYRRALPIPAWESQPREQARLEELPDEDEDANLD</sequence>